<proteinExistence type="inferred from homology"/>
<protein>
    <recommendedName>
        <fullName evidence="1">Ion-translocating oxidoreductase complex subunit C</fullName>
        <ecNumber evidence="1">7.-.-.-</ecNumber>
    </recommendedName>
    <alternativeName>
        <fullName evidence="1">Rnf electron transport complex subunit C</fullName>
    </alternativeName>
</protein>
<organism>
    <name type="scientific">Serratia proteamaculans (strain 568)</name>
    <dbReference type="NCBI Taxonomy" id="399741"/>
    <lineage>
        <taxon>Bacteria</taxon>
        <taxon>Pseudomonadati</taxon>
        <taxon>Pseudomonadota</taxon>
        <taxon>Gammaproteobacteria</taxon>
        <taxon>Enterobacterales</taxon>
        <taxon>Yersiniaceae</taxon>
        <taxon>Serratia</taxon>
    </lineage>
</organism>
<reference key="1">
    <citation type="submission" date="2007-09" db="EMBL/GenBank/DDBJ databases">
        <title>Complete sequence of chromosome of Serratia proteamaculans 568.</title>
        <authorList>
            <consortium name="US DOE Joint Genome Institute"/>
            <person name="Copeland A."/>
            <person name="Lucas S."/>
            <person name="Lapidus A."/>
            <person name="Barry K."/>
            <person name="Glavina del Rio T."/>
            <person name="Dalin E."/>
            <person name="Tice H."/>
            <person name="Pitluck S."/>
            <person name="Chain P."/>
            <person name="Malfatti S."/>
            <person name="Shin M."/>
            <person name="Vergez L."/>
            <person name="Schmutz J."/>
            <person name="Larimer F."/>
            <person name="Land M."/>
            <person name="Hauser L."/>
            <person name="Kyrpides N."/>
            <person name="Kim E."/>
            <person name="Taghavi S."/>
            <person name="Newman L."/>
            <person name="Vangronsveld J."/>
            <person name="van der Lelie D."/>
            <person name="Richardson P."/>
        </authorList>
    </citation>
    <scope>NUCLEOTIDE SEQUENCE [LARGE SCALE GENOMIC DNA]</scope>
    <source>
        <strain>568</strain>
    </source>
</reference>
<feature type="chain" id="PRO_1000060340" description="Ion-translocating oxidoreductase complex subunit C">
    <location>
        <begin position="1"/>
        <end position="703"/>
    </location>
</feature>
<feature type="domain" description="4Fe-4S ferredoxin-type 1" evidence="1">
    <location>
        <begin position="368"/>
        <end position="397"/>
    </location>
</feature>
<feature type="domain" description="4Fe-4S ferredoxin-type 2" evidence="1">
    <location>
        <begin position="407"/>
        <end position="436"/>
    </location>
</feature>
<feature type="region of interest" description="Disordered" evidence="2">
    <location>
        <begin position="505"/>
        <end position="558"/>
    </location>
</feature>
<feature type="region of interest" description="Disordered" evidence="2">
    <location>
        <begin position="653"/>
        <end position="674"/>
    </location>
</feature>
<feature type="compositionally biased region" description="Basic and acidic residues" evidence="2">
    <location>
        <begin position="524"/>
        <end position="539"/>
    </location>
</feature>
<feature type="binding site" evidence="1">
    <location>
        <position position="377"/>
    </location>
    <ligand>
        <name>[4Fe-4S] cluster</name>
        <dbReference type="ChEBI" id="CHEBI:49883"/>
        <label>1</label>
    </ligand>
</feature>
<feature type="binding site" evidence="1">
    <location>
        <position position="380"/>
    </location>
    <ligand>
        <name>[4Fe-4S] cluster</name>
        <dbReference type="ChEBI" id="CHEBI:49883"/>
        <label>1</label>
    </ligand>
</feature>
<feature type="binding site" evidence="1">
    <location>
        <position position="383"/>
    </location>
    <ligand>
        <name>[4Fe-4S] cluster</name>
        <dbReference type="ChEBI" id="CHEBI:49883"/>
        <label>1</label>
    </ligand>
</feature>
<feature type="binding site" evidence="1">
    <location>
        <position position="387"/>
    </location>
    <ligand>
        <name>[4Fe-4S] cluster</name>
        <dbReference type="ChEBI" id="CHEBI:49883"/>
        <label>2</label>
    </ligand>
</feature>
<feature type="binding site" evidence="1">
    <location>
        <position position="416"/>
    </location>
    <ligand>
        <name>[4Fe-4S] cluster</name>
        <dbReference type="ChEBI" id="CHEBI:49883"/>
        <label>2</label>
    </ligand>
</feature>
<feature type="binding site" evidence="1">
    <location>
        <position position="419"/>
    </location>
    <ligand>
        <name>[4Fe-4S] cluster</name>
        <dbReference type="ChEBI" id="CHEBI:49883"/>
        <label>2</label>
    </ligand>
</feature>
<feature type="binding site" evidence="1">
    <location>
        <position position="422"/>
    </location>
    <ligand>
        <name>[4Fe-4S] cluster</name>
        <dbReference type="ChEBI" id="CHEBI:49883"/>
        <label>2</label>
    </ligand>
</feature>
<feature type="binding site" evidence="1">
    <location>
        <position position="426"/>
    </location>
    <ligand>
        <name>[4Fe-4S] cluster</name>
        <dbReference type="ChEBI" id="CHEBI:49883"/>
        <label>1</label>
    </ligand>
</feature>
<name>RNFC_SERP5</name>
<sequence>MLNLFAAFKKDRIWDFDGGIHPPEMKTQSSGVPLRTAPLPDKFIIPLQQHLGPEGELCVKVGDTVLKGQPLTVGRGRTVPVHAPTSGTISAITPHITAHPSGLAELCVIIQPDGEDRWCERAPVADYRQLTASELIQRIHQAGIAGLGGAGFPTASKLQGGMNGVETLILNAAECEPYITADDRLMQEHADQVIEGTQILRHLLQPKVTLIGIEDNKPEAIAALKLALRGQPGIALRVIPTKYPSGGAKQLTKILIGKEVPHGKHSSAIGVLMQNVGTAFAIKRAIVDGEPLIERVVTLTGEALSLPGNLWARIGTPVQHLLKFAGFQPQAQQMVVMGGPLMGFTLPALHVPIVKISNCILAPSVSEMAPQEQEQSCIRCGLCVDACPAGLLPQQLYWFSRGEEHEKARNHNLFDCIECGACAFVCPSNIPLVQYYRQEKAEIKAIDLEAARTAEAKARYEAKLARLEREKLAREERHKKAAVKLTDGDQDAVQAALARVRSKNAVPATGTISGDAPDNSEMNAAREARKAQARERRAQQETPVAPVTASASEDEDPRKAAVAAALARVKAKKAAPQATAVETPAESPAVVTEEDPRKAAVAAALARVKAKKAAQQATAVETPAESPAVVTEEDPRKAAVAAALARVKAKKAAQQATAVETPAESPAVVTEEDPRKAAVAAAIARAKAKRAAQSLTTADTDKE</sequence>
<gene>
    <name evidence="1" type="primary">rnfC</name>
    <name type="ordered locus">Spro_2239</name>
</gene>
<dbReference type="EC" id="7.-.-.-" evidence="1"/>
<dbReference type="EMBL" id="CP000826">
    <property type="protein sequence ID" value="ABV41340.1"/>
    <property type="molecule type" value="Genomic_DNA"/>
</dbReference>
<dbReference type="SMR" id="A8GE00"/>
<dbReference type="STRING" id="399741.Spro_2239"/>
<dbReference type="KEGG" id="spe:Spro_2239"/>
<dbReference type="eggNOG" id="COG4656">
    <property type="taxonomic scope" value="Bacteria"/>
</dbReference>
<dbReference type="HOGENOM" id="CLU_010808_2_1_6"/>
<dbReference type="OrthoDB" id="9767754at2"/>
<dbReference type="GO" id="GO:0005886">
    <property type="term" value="C:plasma membrane"/>
    <property type="evidence" value="ECO:0007669"/>
    <property type="project" value="UniProtKB-SubCell"/>
</dbReference>
<dbReference type="GO" id="GO:0051539">
    <property type="term" value="F:4 iron, 4 sulfur cluster binding"/>
    <property type="evidence" value="ECO:0007669"/>
    <property type="project" value="UniProtKB-KW"/>
</dbReference>
<dbReference type="GO" id="GO:0009055">
    <property type="term" value="F:electron transfer activity"/>
    <property type="evidence" value="ECO:0007669"/>
    <property type="project" value="InterPro"/>
</dbReference>
<dbReference type="GO" id="GO:0046872">
    <property type="term" value="F:metal ion binding"/>
    <property type="evidence" value="ECO:0007669"/>
    <property type="project" value="UniProtKB-KW"/>
</dbReference>
<dbReference type="GO" id="GO:0022900">
    <property type="term" value="P:electron transport chain"/>
    <property type="evidence" value="ECO:0007669"/>
    <property type="project" value="UniProtKB-UniRule"/>
</dbReference>
<dbReference type="Gene3D" id="3.30.70.20">
    <property type="match status" value="1"/>
</dbReference>
<dbReference type="Gene3D" id="3.40.50.11540">
    <property type="entry name" value="NADH-ubiquinone oxidoreductase 51kDa subunit"/>
    <property type="match status" value="1"/>
</dbReference>
<dbReference type="HAMAP" id="MF_00461">
    <property type="entry name" value="RsxC_RnfC"/>
    <property type="match status" value="1"/>
</dbReference>
<dbReference type="InterPro" id="IPR017896">
    <property type="entry name" value="4Fe4S_Fe-S-bd"/>
</dbReference>
<dbReference type="InterPro" id="IPR017900">
    <property type="entry name" value="4Fe4S_Fe_S_CS"/>
</dbReference>
<dbReference type="InterPro" id="IPR010208">
    <property type="entry name" value="Ion_transpt_RnfC/RsxC"/>
</dbReference>
<dbReference type="InterPro" id="IPR011538">
    <property type="entry name" value="Nuo51_FMN-bd"/>
</dbReference>
<dbReference type="InterPro" id="IPR037225">
    <property type="entry name" value="Nuo51_FMN-bd_sf"/>
</dbReference>
<dbReference type="InterPro" id="IPR026902">
    <property type="entry name" value="RnfC_N"/>
</dbReference>
<dbReference type="InterPro" id="IPR019554">
    <property type="entry name" value="Soluble_ligand-bd"/>
</dbReference>
<dbReference type="NCBIfam" id="NF003454">
    <property type="entry name" value="PRK05035.1"/>
    <property type="match status" value="1"/>
</dbReference>
<dbReference type="NCBIfam" id="TIGR01945">
    <property type="entry name" value="rnfC"/>
    <property type="match status" value="1"/>
</dbReference>
<dbReference type="PANTHER" id="PTHR43034">
    <property type="entry name" value="ION-TRANSLOCATING OXIDOREDUCTASE COMPLEX SUBUNIT C"/>
    <property type="match status" value="1"/>
</dbReference>
<dbReference type="PANTHER" id="PTHR43034:SF2">
    <property type="entry name" value="ION-TRANSLOCATING OXIDOREDUCTASE COMPLEX SUBUNIT C"/>
    <property type="match status" value="1"/>
</dbReference>
<dbReference type="Pfam" id="PF01512">
    <property type="entry name" value="Complex1_51K"/>
    <property type="match status" value="1"/>
</dbReference>
<dbReference type="Pfam" id="PF12838">
    <property type="entry name" value="Fer4_7"/>
    <property type="match status" value="1"/>
</dbReference>
<dbReference type="Pfam" id="PF13375">
    <property type="entry name" value="RnfC_N"/>
    <property type="match status" value="1"/>
</dbReference>
<dbReference type="Pfam" id="PF10531">
    <property type="entry name" value="SLBB"/>
    <property type="match status" value="1"/>
</dbReference>
<dbReference type="SUPFAM" id="SSF46548">
    <property type="entry name" value="alpha-helical ferredoxin"/>
    <property type="match status" value="1"/>
</dbReference>
<dbReference type="SUPFAM" id="SSF142019">
    <property type="entry name" value="Nqo1 FMN-binding domain-like"/>
    <property type="match status" value="1"/>
</dbReference>
<dbReference type="PROSITE" id="PS00198">
    <property type="entry name" value="4FE4S_FER_1"/>
    <property type="match status" value="2"/>
</dbReference>
<dbReference type="PROSITE" id="PS51379">
    <property type="entry name" value="4FE4S_FER_2"/>
    <property type="match status" value="2"/>
</dbReference>
<accession>A8GE00</accession>
<evidence type="ECO:0000255" key="1">
    <source>
        <dbReference type="HAMAP-Rule" id="MF_00461"/>
    </source>
</evidence>
<evidence type="ECO:0000256" key="2">
    <source>
        <dbReference type="SAM" id="MobiDB-lite"/>
    </source>
</evidence>
<comment type="function">
    <text evidence="1">Part of a membrane-bound complex that couples electron transfer with translocation of ions across the membrane.</text>
</comment>
<comment type="cofactor">
    <cofactor evidence="1">
        <name>[4Fe-4S] cluster</name>
        <dbReference type="ChEBI" id="CHEBI:49883"/>
    </cofactor>
    <text evidence="1">Binds 2 [4Fe-4S] clusters per subunit.</text>
</comment>
<comment type="subunit">
    <text evidence="1">The complex is composed of six subunits: RnfA, RnfB, RnfC, RnfD, RnfE and RnfG.</text>
</comment>
<comment type="subcellular location">
    <subcellularLocation>
        <location evidence="1">Cell inner membrane</location>
        <topology evidence="1">Peripheral membrane protein</topology>
    </subcellularLocation>
</comment>
<comment type="similarity">
    <text evidence="1">Belongs to the 4Fe4S bacterial-type ferredoxin family. RnfC subfamily.</text>
</comment>
<keyword id="KW-0004">4Fe-4S</keyword>
<keyword id="KW-0997">Cell inner membrane</keyword>
<keyword id="KW-1003">Cell membrane</keyword>
<keyword id="KW-0249">Electron transport</keyword>
<keyword id="KW-0408">Iron</keyword>
<keyword id="KW-0411">Iron-sulfur</keyword>
<keyword id="KW-0472">Membrane</keyword>
<keyword id="KW-0479">Metal-binding</keyword>
<keyword id="KW-0677">Repeat</keyword>
<keyword id="KW-1278">Translocase</keyword>
<keyword id="KW-0813">Transport</keyword>